<keyword id="KW-0687">Ribonucleoprotein</keyword>
<keyword id="KW-0689">Ribosomal protein</keyword>
<keyword id="KW-0694">RNA-binding</keyword>
<keyword id="KW-0699">rRNA-binding</keyword>
<dbReference type="EMBL" id="CP000768">
    <property type="protein sequence ID" value="ABS44132.1"/>
    <property type="molecule type" value="Genomic_DNA"/>
</dbReference>
<dbReference type="SMR" id="A7H646"/>
<dbReference type="KEGG" id="cjd:JJD26997_2071"/>
<dbReference type="HOGENOM" id="CLU_095071_2_1_7"/>
<dbReference type="Proteomes" id="UP000002302">
    <property type="component" value="Chromosome"/>
</dbReference>
<dbReference type="GO" id="GO:0022625">
    <property type="term" value="C:cytosolic large ribosomal subunit"/>
    <property type="evidence" value="ECO:0007669"/>
    <property type="project" value="TreeGrafter"/>
</dbReference>
<dbReference type="GO" id="GO:0070180">
    <property type="term" value="F:large ribosomal subunit rRNA binding"/>
    <property type="evidence" value="ECO:0007669"/>
    <property type="project" value="TreeGrafter"/>
</dbReference>
<dbReference type="GO" id="GO:0003735">
    <property type="term" value="F:structural constituent of ribosome"/>
    <property type="evidence" value="ECO:0007669"/>
    <property type="project" value="InterPro"/>
</dbReference>
<dbReference type="GO" id="GO:0006412">
    <property type="term" value="P:translation"/>
    <property type="evidence" value="ECO:0007669"/>
    <property type="project" value="UniProtKB-UniRule"/>
</dbReference>
<dbReference type="CDD" id="cd00337">
    <property type="entry name" value="Ribosomal_uL14"/>
    <property type="match status" value="1"/>
</dbReference>
<dbReference type="FunFam" id="2.40.150.20:FF:000001">
    <property type="entry name" value="50S ribosomal protein L14"/>
    <property type="match status" value="1"/>
</dbReference>
<dbReference type="Gene3D" id="2.40.150.20">
    <property type="entry name" value="Ribosomal protein L14"/>
    <property type="match status" value="1"/>
</dbReference>
<dbReference type="HAMAP" id="MF_01367">
    <property type="entry name" value="Ribosomal_uL14"/>
    <property type="match status" value="1"/>
</dbReference>
<dbReference type="InterPro" id="IPR000218">
    <property type="entry name" value="Ribosomal_uL14"/>
</dbReference>
<dbReference type="InterPro" id="IPR005745">
    <property type="entry name" value="Ribosomal_uL14_bac-type"/>
</dbReference>
<dbReference type="InterPro" id="IPR019972">
    <property type="entry name" value="Ribosomal_uL14_CS"/>
</dbReference>
<dbReference type="InterPro" id="IPR036853">
    <property type="entry name" value="Ribosomal_uL14_sf"/>
</dbReference>
<dbReference type="NCBIfam" id="TIGR01067">
    <property type="entry name" value="rplN_bact"/>
    <property type="match status" value="1"/>
</dbReference>
<dbReference type="PANTHER" id="PTHR11761">
    <property type="entry name" value="50S/60S RIBOSOMAL PROTEIN L14/L23"/>
    <property type="match status" value="1"/>
</dbReference>
<dbReference type="PANTHER" id="PTHR11761:SF3">
    <property type="entry name" value="LARGE RIBOSOMAL SUBUNIT PROTEIN UL14M"/>
    <property type="match status" value="1"/>
</dbReference>
<dbReference type="Pfam" id="PF00238">
    <property type="entry name" value="Ribosomal_L14"/>
    <property type="match status" value="1"/>
</dbReference>
<dbReference type="SMART" id="SM01374">
    <property type="entry name" value="Ribosomal_L14"/>
    <property type="match status" value="1"/>
</dbReference>
<dbReference type="SUPFAM" id="SSF50193">
    <property type="entry name" value="Ribosomal protein L14"/>
    <property type="match status" value="1"/>
</dbReference>
<dbReference type="PROSITE" id="PS00049">
    <property type="entry name" value="RIBOSOMAL_L14"/>
    <property type="match status" value="1"/>
</dbReference>
<gene>
    <name evidence="1" type="primary">rplN</name>
    <name type="ordered locus">JJD26997_2071</name>
</gene>
<feature type="chain" id="PRO_1000055544" description="Large ribosomal subunit protein uL14">
    <location>
        <begin position="1"/>
        <end position="122"/>
    </location>
</feature>
<proteinExistence type="inferred from homology"/>
<name>RL14_CAMJD</name>
<reference key="1">
    <citation type="submission" date="2007-07" db="EMBL/GenBank/DDBJ databases">
        <title>Complete genome sequence of Campylobacter jejuni subsp doylei 269.97 isolated from human blood.</title>
        <authorList>
            <person name="Fouts D.E."/>
            <person name="Mongodin E.F."/>
            <person name="Puiu D."/>
            <person name="Sebastian Y."/>
            <person name="Miller W.G."/>
            <person name="Mandrell R.E."/>
            <person name="Lastovica A.J."/>
            <person name="Nelson K.E."/>
        </authorList>
    </citation>
    <scope>NUCLEOTIDE SEQUENCE [LARGE SCALE GENOMIC DNA]</scope>
    <source>
        <strain>ATCC BAA-1458 / RM4099 / 269.97</strain>
    </source>
</reference>
<sequence length="122" mass="13306">MIQSFTRLAVADNSGAKELMCIKVLGGSKRRYATVGDVIVASVKKALPNGKVKKGQVVKAVIVRTKKEIHRDNGSLIRFDENAAVILDNKREPIGTRIFGPVGREVRYGGFMKIVSLAPEVL</sequence>
<evidence type="ECO:0000255" key="1">
    <source>
        <dbReference type="HAMAP-Rule" id="MF_01367"/>
    </source>
</evidence>
<evidence type="ECO:0000305" key="2"/>
<accession>A7H646</accession>
<comment type="function">
    <text evidence="1">Binds to 23S rRNA. Forms part of two intersubunit bridges in the 70S ribosome.</text>
</comment>
<comment type="subunit">
    <text evidence="1">Part of the 50S ribosomal subunit. Forms a cluster with proteins L3 and L19. In the 70S ribosome, L14 and L19 interact and together make contacts with the 16S rRNA in bridges B5 and B8.</text>
</comment>
<comment type="similarity">
    <text evidence="1">Belongs to the universal ribosomal protein uL14 family.</text>
</comment>
<organism>
    <name type="scientific">Campylobacter jejuni subsp. doylei (strain ATCC BAA-1458 / RM4099 / 269.97)</name>
    <dbReference type="NCBI Taxonomy" id="360109"/>
    <lineage>
        <taxon>Bacteria</taxon>
        <taxon>Pseudomonadati</taxon>
        <taxon>Campylobacterota</taxon>
        <taxon>Epsilonproteobacteria</taxon>
        <taxon>Campylobacterales</taxon>
        <taxon>Campylobacteraceae</taxon>
        <taxon>Campylobacter</taxon>
    </lineage>
</organism>
<protein>
    <recommendedName>
        <fullName evidence="1">Large ribosomal subunit protein uL14</fullName>
    </recommendedName>
    <alternativeName>
        <fullName evidence="2">50S ribosomal protein L14</fullName>
    </alternativeName>
</protein>